<proteinExistence type="inferred from homology"/>
<keyword id="KW-0256">Endoplasmic reticulum</keyword>
<keyword id="KW-0378">Hydrolase</keyword>
<keyword id="KW-0472">Membrane</keyword>
<keyword id="KW-0653">Protein transport</keyword>
<keyword id="KW-0812">Transmembrane</keyword>
<keyword id="KW-1133">Transmembrane helix</keyword>
<keyword id="KW-0813">Transport</keyword>
<reference key="1">
    <citation type="journal article" date="2007" name="Plant Cell">
        <title>Dothideomycete-plant interactions illuminated by genome sequencing and EST analysis of the wheat pathogen Stagonospora nodorum.</title>
        <authorList>
            <person name="Hane J.K."/>
            <person name="Lowe R.G.T."/>
            <person name="Solomon P.S."/>
            <person name="Tan K.-C."/>
            <person name="Schoch C.L."/>
            <person name="Spatafora J.W."/>
            <person name="Crous P.W."/>
            <person name="Kodira C.D."/>
            <person name="Birren B.W."/>
            <person name="Galagan J.E."/>
            <person name="Torriani S.F.F."/>
            <person name="McDonald B.A."/>
            <person name="Oliver R.P."/>
        </authorList>
    </citation>
    <scope>NUCLEOTIDE SEQUENCE [LARGE SCALE GENOMIC DNA]</scope>
    <source>
        <strain>SN15 / ATCC MYA-4574 / FGSC 10173</strain>
    </source>
</reference>
<protein>
    <recommendedName>
        <fullName>GPI inositol-deacylase</fullName>
        <ecNumber>3.1.-.-</ecNumber>
    </recommendedName>
</protein>
<sequence length="1049" mass="116830">MVREKAQVTMGSTTMDMLEDEVVKAQDRRWRLRLRNPWACSAYTLVTTALGFAAFFLMLQSFLTKQLDTKGCEMVYMRPMYSKFDDFDTEHTRFASKYSLYLYREWGIDEEFTVKGAPVLFIPGNAGSYKQVRSLAAESAYHYHNSVQHESNAGKGERRPLDFFAVDFNEDFTAFHGQTVLDQAEYLNDAITFILSLYHTPGRSRRDPHLPDPTSVIIVGHSMGGVVARTLFTMPNYQANSINTIVTIAAPHARPPVSFDGDIVRTQNAVNSYWRSAYAQDSAKDNPLQHVTLVSIAGGGLDNIVSSDYASIASIVPETHGFTVFSSSIPNCWTGADHLAITWCDQVRKSIVRALYDVVDVSQAMQTLPVTNRMRFFKKWFLTGLEDIAEKTLPMTTEATLLTVDVDTAILPQEEQLVLRSLGRSSPNIKAFLLPVPPRDRGEKIFTLLTNERLDGPGEHGRLEVLFCSMSSAQSTQSYLTHLDFAGESPTATKLACKNAASDVIILPESTSHSNFPFRPDQAPFSYLQYDVRDLAQHQFVAVLDKVAHHSAGWVVAAFSASSEATVKVNPSLQRLLYTGISLQLPPRRPLTTEISIPALHSSLLAYDVHISRQKCSQGELFAPLLRQYISDLYESKFFVNVEDAMINVHGRGRPTCRAALSSKSPSNGLSLQIWADPTCDSSIDVTLKVDFLGSLGKLWMRYRIVFAAFPLLVVALVLCQQFRTYDATGVFISFAQSLNECMYSSLPLAITALTFLSITLATAQMQSKKLQALGGPASIIGAFFDNDNELLLGSEDPFFWFLVPLFGIMCTAICVMVNYVVLILTYLFATLYALVRSNRLLDASGQRTPDAFAVTSTRRRIINTLILLSLISTAIPYHFAYVVLCIVQLATCIRGFRLAKEAQLDTNYNFYNYAHSIFILMLWILPINLPVLVVWIRNLAIQWLTPFSSHHNVLSITPFILLVETLSTGRMVPRVRPGISLFTNVFLFAIGAYAAVYGVTYAYVLHHLANILCAWLVAIHFDTLGLAFEDSSKGVAVVGGRSEGKKRP</sequence>
<comment type="function">
    <text evidence="1">Involved in inositol deacylation of GPI-anchored proteins which plays important roles in the quality control and ER-associated degradation of GPI-anchored proteins.</text>
</comment>
<comment type="subcellular location">
    <subcellularLocation>
        <location evidence="1">Endoplasmic reticulum membrane</location>
        <topology evidence="1">Multi-pass membrane protein</topology>
    </subcellularLocation>
</comment>
<comment type="similarity">
    <text evidence="3">Belongs to the GPI inositol-deacylase family.</text>
</comment>
<gene>
    <name type="primary">BST1</name>
    <name type="ORF">SNOG_05858</name>
</gene>
<accession>Q0UQV6</accession>
<name>BST1_PHANO</name>
<dbReference type="EC" id="3.1.-.-"/>
<dbReference type="EMBL" id="CH445332">
    <property type="protein sequence ID" value="EAT86922.2"/>
    <property type="molecule type" value="Genomic_DNA"/>
</dbReference>
<dbReference type="RefSeq" id="XP_001796254.1">
    <property type="nucleotide sequence ID" value="XM_001796202.1"/>
</dbReference>
<dbReference type="SMR" id="Q0UQV6"/>
<dbReference type="FunCoup" id="Q0UQV6">
    <property type="interactions" value="41"/>
</dbReference>
<dbReference type="STRING" id="321614.Q0UQV6"/>
<dbReference type="ESTHER" id="phano-bst1">
    <property type="family name" value="PGAP1"/>
</dbReference>
<dbReference type="EnsemblFungi" id="SNOT_05858">
    <property type="protein sequence ID" value="SNOT_05858"/>
    <property type="gene ID" value="SNOG_05858"/>
</dbReference>
<dbReference type="GeneID" id="5973131"/>
<dbReference type="KEGG" id="pno:SNOG_05858"/>
<dbReference type="VEuPathDB" id="FungiDB:JI435_058580"/>
<dbReference type="eggNOG" id="KOG3724">
    <property type="taxonomic scope" value="Eukaryota"/>
</dbReference>
<dbReference type="HOGENOM" id="CLU_006103_0_0_1"/>
<dbReference type="InParanoid" id="Q0UQV6"/>
<dbReference type="Proteomes" id="UP000001055">
    <property type="component" value="Unassembled WGS sequence"/>
</dbReference>
<dbReference type="GO" id="GO:0005783">
    <property type="term" value="C:endoplasmic reticulum"/>
    <property type="evidence" value="ECO:0000318"/>
    <property type="project" value="GO_Central"/>
</dbReference>
<dbReference type="GO" id="GO:0005789">
    <property type="term" value="C:endoplasmic reticulum membrane"/>
    <property type="evidence" value="ECO:0007669"/>
    <property type="project" value="UniProtKB-SubCell"/>
</dbReference>
<dbReference type="GO" id="GO:0050185">
    <property type="term" value="F:phosphatidylinositol deacylase activity"/>
    <property type="evidence" value="ECO:0000318"/>
    <property type="project" value="GO_Central"/>
</dbReference>
<dbReference type="GO" id="GO:0006506">
    <property type="term" value="P:GPI anchor biosynthetic process"/>
    <property type="evidence" value="ECO:0000318"/>
    <property type="project" value="GO_Central"/>
</dbReference>
<dbReference type="GO" id="GO:0015031">
    <property type="term" value="P:protein transport"/>
    <property type="evidence" value="ECO:0007669"/>
    <property type="project" value="UniProtKB-KW"/>
</dbReference>
<dbReference type="FunFam" id="3.40.50.1820:FF:000056">
    <property type="entry name" value="GPI inositol-deacylase"/>
    <property type="match status" value="1"/>
</dbReference>
<dbReference type="Gene3D" id="3.40.50.1820">
    <property type="entry name" value="alpha/beta hydrolase"/>
    <property type="match status" value="1"/>
</dbReference>
<dbReference type="InterPro" id="IPR029058">
    <property type="entry name" value="AB_hydrolase_fold"/>
</dbReference>
<dbReference type="InterPro" id="IPR012908">
    <property type="entry name" value="PGAP1-ab_dom-like"/>
</dbReference>
<dbReference type="InterPro" id="IPR039529">
    <property type="entry name" value="PGAP1/BST1"/>
</dbReference>
<dbReference type="InterPro" id="IPR056824">
    <property type="entry name" value="PGAP1_TMD"/>
</dbReference>
<dbReference type="PANTHER" id="PTHR15495:SF7">
    <property type="entry name" value="GPI INOSITOL-DEACYLASE"/>
    <property type="match status" value="1"/>
</dbReference>
<dbReference type="PANTHER" id="PTHR15495">
    <property type="entry name" value="NEGATIVE REGULATOR OF VESICLE FORMATION-RELATED"/>
    <property type="match status" value="1"/>
</dbReference>
<dbReference type="Pfam" id="PF07819">
    <property type="entry name" value="PGAP1"/>
    <property type="match status" value="1"/>
</dbReference>
<dbReference type="Pfam" id="PF25141">
    <property type="entry name" value="PGAP1_2nd"/>
    <property type="match status" value="1"/>
</dbReference>
<dbReference type="Pfam" id="PF25140">
    <property type="entry name" value="PGAP1_TMD"/>
    <property type="match status" value="1"/>
</dbReference>
<dbReference type="SUPFAM" id="SSF53474">
    <property type="entry name" value="alpha/beta-Hydrolases"/>
    <property type="match status" value="1"/>
</dbReference>
<dbReference type="PROSITE" id="PS00120">
    <property type="entry name" value="LIPASE_SER"/>
    <property type="match status" value="1"/>
</dbReference>
<evidence type="ECO:0000250" key="1"/>
<evidence type="ECO:0000255" key="2"/>
<evidence type="ECO:0000305" key="3"/>
<organism>
    <name type="scientific">Phaeosphaeria nodorum (strain SN15 / ATCC MYA-4574 / FGSC 10173)</name>
    <name type="common">Glume blotch fungus</name>
    <name type="synonym">Parastagonospora nodorum</name>
    <dbReference type="NCBI Taxonomy" id="321614"/>
    <lineage>
        <taxon>Eukaryota</taxon>
        <taxon>Fungi</taxon>
        <taxon>Dikarya</taxon>
        <taxon>Ascomycota</taxon>
        <taxon>Pezizomycotina</taxon>
        <taxon>Dothideomycetes</taxon>
        <taxon>Pleosporomycetidae</taxon>
        <taxon>Pleosporales</taxon>
        <taxon>Pleosporineae</taxon>
        <taxon>Phaeosphaeriaceae</taxon>
        <taxon>Parastagonospora</taxon>
    </lineage>
</organism>
<feature type="chain" id="PRO_0000277641" description="GPI inositol-deacylase">
    <location>
        <begin position="1"/>
        <end position="1049"/>
    </location>
</feature>
<feature type="transmembrane region" description="Helical" evidence="2">
    <location>
        <begin position="39"/>
        <end position="59"/>
    </location>
</feature>
<feature type="transmembrane region" description="Helical" evidence="2">
    <location>
        <begin position="699"/>
        <end position="719"/>
    </location>
</feature>
<feature type="transmembrane region" description="Helical" evidence="2">
    <location>
        <begin position="742"/>
        <end position="762"/>
    </location>
</feature>
<feature type="transmembrane region" description="Helical" evidence="2">
    <location>
        <begin position="798"/>
        <end position="818"/>
    </location>
</feature>
<feature type="transmembrane region" description="Helical" evidence="2">
    <location>
        <begin position="867"/>
        <end position="887"/>
    </location>
</feature>
<feature type="transmembrane region" description="Helical" evidence="2">
    <location>
        <begin position="917"/>
        <end position="937"/>
    </location>
</feature>
<feature type="transmembrane region" description="Helical" evidence="2">
    <location>
        <begin position="944"/>
        <end position="964"/>
    </location>
</feature>
<feature type="transmembrane region" description="Helical" evidence="2">
    <location>
        <begin position="986"/>
        <end position="1006"/>
    </location>
</feature>
<feature type="transmembrane region" description="Helical" evidence="2">
    <location>
        <begin position="1009"/>
        <end position="1029"/>
    </location>
</feature>
<feature type="active site" evidence="1">
    <location>
        <position position="222"/>
    </location>
</feature>